<proteinExistence type="inferred from homology"/>
<protein>
    <recommendedName>
        <fullName>Probable 2-isopropylmalate synthase</fullName>
        <ecNumber>2.3.3.13</ecNumber>
    </recommendedName>
    <alternativeName>
        <fullName>Alpha-IPM synthase</fullName>
    </alternativeName>
    <alternativeName>
        <fullName>Alpha-isopropylmalate synthase</fullName>
    </alternativeName>
</protein>
<feature type="chain" id="PRO_0000140407" description="Probable 2-isopropylmalate synthase">
    <location>
        <begin position="1"/>
        <end position="503"/>
    </location>
</feature>
<feature type="domain" description="Pyruvate carboxyltransferase" evidence="4">
    <location>
        <begin position="8"/>
        <end position="259"/>
    </location>
</feature>
<feature type="binding site" evidence="3">
    <location>
        <position position="17"/>
    </location>
    <ligand>
        <name>a divalent metal cation</name>
        <dbReference type="ChEBI" id="CHEBI:60240"/>
    </ligand>
</feature>
<feature type="binding site" evidence="3">
    <location>
        <position position="197"/>
    </location>
    <ligand>
        <name>a divalent metal cation</name>
        <dbReference type="ChEBI" id="CHEBI:60240"/>
    </ligand>
</feature>
<feature type="binding site" evidence="3">
    <location>
        <position position="199"/>
    </location>
    <ligand>
        <name>a divalent metal cation</name>
        <dbReference type="ChEBI" id="CHEBI:60240"/>
    </ligand>
</feature>
<feature type="binding site" evidence="3">
    <location>
        <position position="233"/>
    </location>
    <ligand>
        <name>a divalent metal cation</name>
        <dbReference type="ChEBI" id="CHEBI:60240"/>
    </ligand>
</feature>
<comment type="function">
    <text evidence="2">Catalyzes the condensation of the acetyl group of acetyl-CoA with 3-methyl-2-oxobutanoate (2-oxoisovalerate) to form 3-carboxy-3-hydroxy-4-methylpentanoate (2-isopropylmalate).</text>
</comment>
<comment type="catalytic activity">
    <reaction evidence="2">
        <text>3-methyl-2-oxobutanoate + acetyl-CoA + H2O = (2S)-2-isopropylmalate + CoA + H(+)</text>
        <dbReference type="Rhea" id="RHEA:21524"/>
        <dbReference type="ChEBI" id="CHEBI:1178"/>
        <dbReference type="ChEBI" id="CHEBI:11851"/>
        <dbReference type="ChEBI" id="CHEBI:15377"/>
        <dbReference type="ChEBI" id="CHEBI:15378"/>
        <dbReference type="ChEBI" id="CHEBI:57287"/>
        <dbReference type="ChEBI" id="CHEBI:57288"/>
        <dbReference type="EC" id="2.3.3.13"/>
    </reaction>
</comment>
<comment type="cofactor">
    <cofactor evidence="3">
        <name>a divalent metal cation</name>
        <dbReference type="ChEBI" id="CHEBI:60240"/>
    </cofactor>
</comment>
<comment type="pathway">
    <text>Amino-acid biosynthesis; L-leucine biosynthesis; L-leucine from 3-methyl-2-oxobutanoate: step 1/4.</text>
</comment>
<comment type="subunit">
    <text evidence="1">Homodimer.</text>
</comment>
<comment type="similarity">
    <text evidence="5">Belongs to the alpha-IPM synthase/homocitrate synthase family.</text>
</comment>
<keyword id="KW-0028">Amino-acid biosynthesis</keyword>
<keyword id="KW-0100">Branched-chain amino acid biosynthesis</keyword>
<keyword id="KW-0432">Leucine biosynthesis</keyword>
<keyword id="KW-0479">Metal-binding</keyword>
<keyword id="KW-1185">Reference proteome</keyword>
<keyword id="KW-0808">Transferase</keyword>
<name>LEU1_ARCFU</name>
<sequence length="503" mass="55212">MSAVMTTIRVFDTTLRDGEQMPGVSLPLEYKIRIAKQLDKLGVDVIEAGFPSATKGEFESVKEISSLSLNAEICGLARIVKEDIDAAINANVDMVHIFVPTSRIQIEHTVKMSKEEIIEKSVECVEYIKSHGVKCMFSAMDATRTEVEYLKQIFKAVENAKVDIVNVPDTVGVATPFKFYELIKQLREHLKVPIDVHCHNDFGLAVANTYAAVMAGANEVQVTVNGIGERAGNADLAQVVMILHAIEGIKTNIKTEHLFETSKLVERLTGVKMPPNHPIVGENAFSHESGIHAHGVLKEYSTFEPGVVTPEMVGHKRRIVIGKHAGRYQIKKILEEAGYHLDDEKLNQIFEKVKEMGDKGKRVTDLDLFAIAEVVIGELKREEKAILVDEVTVLTGNKITPTAVLNAEVFGHRKVTSAIGVGPVDASLKAVTSLVGESIRITEFRMDAITGGSDALAEVYVTVEDDEGHSFTSRGAAQDIVMASIDAVINAVNYLLRMKRRKS</sequence>
<organism>
    <name type="scientific">Archaeoglobus fulgidus (strain ATCC 49558 / DSM 4304 / JCM 9628 / NBRC 100126 / VC-16)</name>
    <dbReference type="NCBI Taxonomy" id="224325"/>
    <lineage>
        <taxon>Archaea</taxon>
        <taxon>Methanobacteriati</taxon>
        <taxon>Methanobacteriota</taxon>
        <taxon>Archaeoglobi</taxon>
        <taxon>Archaeoglobales</taxon>
        <taxon>Archaeoglobaceae</taxon>
        <taxon>Archaeoglobus</taxon>
    </lineage>
</organism>
<evidence type="ECO:0000250" key="1">
    <source>
        <dbReference type="UniProtKB" id="P9WQB3"/>
    </source>
</evidence>
<evidence type="ECO:0000250" key="2">
    <source>
        <dbReference type="UniProtKB" id="Q58595"/>
    </source>
</evidence>
<evidence type="ECO:0000250" key="3">
    <source>
        <dbReference type="UniProtKB" id="Q9JZG1"/>
    </source>
</evidence>
<evidence type="ECO:0000255" key="4">
    <source>
        <dbReference type="PROSITE-ProRule" id="PRU01151"/>
    </source>
</evidence>
<evidence type="ECO:0000305" key="5"/>
<accession>O30020</accession>
<reference key="1">
    <citation type="journal article" date="1997" name="Nature">
        <title>The complete genome sequence of the hyperthermophilic, sulphate-reducing archaeon Archaeoglobus fulgidus.</title>
        <authorList>
            <person name="Klenk H.-P."/>
            <person name="Clayton R.A."/>
            <person name="Tomb J.-F."/>
            <person name="White O."/>
            <person name="Nelson K.E."/>
            <person name="Ketchum K.A."/>
            <person name="Dodson R.J."/>
            <person name="Gwinn M.L."/>
            <person name="Hickey E.K."/>
            <person name="Peterson J.D."/>
            <person name="Richardson D.L."/>
            <person name="Kerlavage A.R."/>
            <person name="Graham D.E."/>
            <person name="Kyrpides N.C."/>
            <person name="Fleischmann R.D."/>
            <person name="Quackenbush J."/>
            <person name="Lee N.H."/>
            <person name="Sutton G.G."/>
            <person name="Gill S.R."/>
            <person name="Kirkness E.F."/>
            <person name="Dougherty B.A."/>
            <person name="McKenney K."/>
            <person name="Adams M.D."/>
            <person name="Loftus B.J."/>
            <person name="Peterson S.N."/>
            <person name="Reich C.I."/>
            <person name="McNeil L.K."/>
            <person name="Badger J.H."/>
            <person name="Glodek A."/>
            <person name="Zhou L."/>
            <person name="Overbeek R."/>
            <person name="Gocayne J.D."/>
            <person name="Weidman J.F."/>
            <person name="McDonald L.A."/>
            <person name="Utterback T.R."/>
            <person name="Cotton M.D."/>
            <person name="Spriggs T."/>
            <person name="Artiach P."/>
            <person name="Kaine B.P."/>
            <person name="Sykes S.M."/>
            <person name="Sadow P.W."/>
            <person name="D'Andrea K.P."/>
            <person name="Bowman C."/>
            <person name="Fujii C."/>
            <person name="Garland S.A."/>
            <person name="Mason T.M."/>
            <person name="Olsen G.J."/>
            <person name="Fraser C.M."/>
            <person name="Smith H.O."/>
            <person name="Woese C.R."/>
            <person name="Venter J.C."/>
        </authorList>
    </citation>
    <scope>NUCLEOTIDE SEQUENCE [LARGE SCALE GENOMIC DNA]</scope>
    <source>
        <strain>ATCC 49558 / DSM 4304 / JCM 9628 / NBRC 100126 / VC-16</strain>
    </source>
</reference>
<gene>
    <name type="primary">leuA</name>
    <name type="ordered locus">AF_0219</name>
</gene>
<dbReference type="EC" id="2.3.3.13"/>
<dbReference type="EMBL" id="AE000782">
    <property type="protein sequence ID" value="AAB91014.1"/>
    <property type="molecule type" value="Genomic_DNA"/>
</dbReference>
<dbReference type="PIR" id="C69277">
    <property type="entry name" value="C69277"/>
</dbReference>
<dbReference type="SMR" id="O30020"/>
<dbReference type="STRING" id="224325.AF_0219"/>
<dbReference type="PaxDb" id="224325-AF_0219"/>
<dbReference type="EnsemblBacteria" id="AAB91014">
    <property type="protein sequence ID" value="AAB91014"/>
    <property type="gene ID" value="AF_0219"/>
</dbReference>
<dbReference type="KEGG" id="afu:AF_0219"/>
<dbReference type="eggNOG" id="arCOG02092">
    <property type="taxonomic scope" value="Archaea"/>
</dbReference>
<dbReference type="HOGENOM" id="CLU_022158_0_1_2"/>
<dbReference type="PhylomeDB" id="O30020"/>
<dbReference type="UniPathway" id="UPA00048">
    <property type="reaction ID" value="UER00070"/>
</dbReference>
<dbReference type="Proteomes" id="UP000002199">
    <property type="component" value="Chromosome"/>
</dbReference>
<dbReference type="GO" id="GO:0003852">
    <property type="term" value="F:2-isopropylmalate synthase activity"/>
    <property type="evidence" value="ECO:0007669"/>
    <property type="project" value="UniProtKB-EC"/>
</dbReference>
<dbReference type="GO" id="GO:0046872">
    <property type="term" value="F:metal ion binding"/>
    <property type="evidence" value="ECO:0007669"/>
    <property type="project" value="UniProtKB-KW"/>
</dbReference>
<dbReference type="GO" id="GO:0019298">
    <property type="term" value="P:coenzyme B biosynthetic process"/>
    <property type="evidence" value="ECO:0007669"/>
    <property type="project" value="TreeGrafter"/>
</dbReference>
<dbReference type="GO" id="GO:0009098">
    <property type="term" value="P:L-leucine biosynthetic process"/>
    <property type="evidence" value="ECO:0007669"/>
    <property type="project" value="UniProtKB-UniPathway"/>
</dbReference>
<dbReference type="CDD" id="cd07940">
    <property type="entry name" value="DRE_TIM_IPMS"/>
    <property type="match status" value="1"/>
</dbReference>
<dbReference type="FunFam" id="1.10.238.260:FF:000001">
    <property type="entry name" value="2-isopropylmalate synthase"/>
    <property type="match status" value="1"/>
</dbReference>
<dbReference type="FunFam" id="3.20.20.70:FF:000010">
    <property type="entry name" value="2-isopropylmalate synthase"/>
    <property type="match status" value="1"/>
</dbReference>
<dbReference type="FunFam" id="3.30.160.270:FF:000003">
    <property type="entry name" value="2-isopropylmalate synthase"/>
    <property type="match status" value="1"/>
</dbReference>
<dbReference type="Gene3D" id="1.10.238.260">
    <property type="match status" value="1"/>
</dbReference>
<dbReference type="Gene3D" id="3.30.160.270">
    <property type="match status" value="1"/>
</dbReference>
<dbReference type="Gene3D" id="3.20.20.70">
    <property type="entry name" value="Aldolase class I"/>
    <property type="match status" value="1"/>
</dbReference>
<dbReference type="InterPro" id="IPR050073">
    <property type="entry name" value="2-IPM_HCS-like"/>
</dbReference>
<dbReference type="InterPro" id="IPR013709">
    <property type="entry name" value="2-isopropylmalate_synth_dimer"/>
</dbReference>
<dbReference type="InterPro" id="IPR002034">
    <property type="entry name" value="AIPM/Hcit_synth_CS"/>
</dbReference>
<dbReference type="InterPro" id="IPR013785">
    <property type="entry name" value="Aldolase_TIM"/>
</dbReference>
<dbReference type="InterPro" id="IPR011830">
    <property type="entry name" value="LEU1_arch"/>
</dbReference>
<dbReference type="InterPro" id="IPR054691">
    <property type="entry name" value="LeuA/HCS_post-cat"/>
</dbReference>
<dbReference type="InterPro" id="IPR036230">
    <property type="entry name" value="LeuA_allosteric_dom_sf"/>
</dbReference>
<dbReference type="InterPro" id="IPR000891">
    <property type="entry name" value="PYR_CT"/>
</dbReference>
<dbReference type="NCBIfam" id="TIGR02090">
    <property type="entry name" value="LEU1_arch"/>
    <property type="match status" value="1"/>
</dbReference>
<dbReference type="NCBIfam" id="NF002085">
    <property type="entry name" value="PRK00915.1-2"/>
    <property type="match status" value="1"/>
</dbReference>
<dbReference type="NCBIfam" id="NF002086">
    <property type="entry name" value="PRK00915.1-3"/>
    <property type="match status" value="1"/>
</dbReference>
<dbReference type="PANTHER" id="PTHR10277:SF9">
    <property type="entry name" value="2-ISOPROPYLMALATE SYNTHASE 1, CHLOROPLASTIC-RELATED"/>
    <property type="match status" value="1"/>
</dbReference>
<dbReference type="PANTHER" id="PTHR10277">
    <property type="entry name" value="HOMOCITRATE SYNTHASE-RELATED"/>
    <property type="match status" value="1"/>
</dbReference>
<dbReference type="Pfam" id="PF22617">
    <property type="entry name" value="HCS_D2"/>
    <property type="match status" value="1"/>
</dbReference>
<dbReference type="Pfam" id="PF00682">
    <property type="entry name" value="HMGL-like"/>
    <property type="match status" value="1"/>
</dbReference>
<dbReference type="Pfam" id="PF08502">
    <property type="entry name" value="LeuA_dimer"/>
    <property type="match status" value="1"/>
</dbReference>
<dbReference type="SMART" id="SM00917">
    <property type="entry name" value="LeuA_dimer"/>
    <property type="match status" value="1"/>
</dbReference>
<dbReference type="SUPFAM" id="SSF110921">
    <property type="entry name" value="2-isopropylmalate synthase LeuA, allosteric (dimerisation) domain"/>
    <property type="match status" value="1"/>
</dbReference>
<dbReference type="SUPFAM" id="SSF51569">
    <property type="entry name" value="Aldolase"/>
    <property type="match status" value="1"/>
</dbReference>
<dbReference type="PROSITE" id="PS00815">
    <property type="entry name" value="AIPM_HOMOCIT_SYNTH_1"/>
    <property type="match status" value="1"/>
</dbReference>
<dbReference type="PROSITE" id="PS00816">
    <property type="entry name" value="AIPM_HOMOCIT_SYNTH_2"/>
    <property type="match status" value="1"/>
</dbReference>
<dbReference type="PROSITE" id="PS50991">
    <property type="entry name" value="PYR_CT"/>
    <property type="match status" value="1"/>
</dbReference>